<evidence type="ECO:0000255" key="1">
    <source>
        <dbReference type="HAMAP-Rule" id="MF_01653"/>
    </source>
</evidence>
<evidence type="ECO:0000305" key="2"/>
<reference key="1">
    <citation type="journal article" date="2005" name="Proc. Natl. Acad. Sci. U.S.A.">
        <title>The complete genome sequence of Mycobacterium avium subspecies paratuberculosis.</title>
        <authorList>
            <person name="Li L."/>
            <person name="Bannantine J.P."/>
            <person name="Zhang Q."/>
            <person name="Amonsin A."/>
            <person name="May B.J."/>
            <person name="Alt D."/>
            <person name="Banerji N."/>
            <person name="Kanjilal S."/>
            <person name="Kapur V."/>
        </authorList>
    </citation>
    <scope>NUCLEOTIDE SEQUENCE [LARGE SCALE GENOMIC DNA]</scope>
    <source>
        <strain>ATCC BAA-968 / K-10</strain>
    </source>
</reference>
<keyword id="KW-0058">Aromatic hydrocarbons catabolism</keyword>
<keyword id="KW-0223">Dioxygenase</keyword>
<keyword id="KW-0408">Iron</keyword>
<keyword id="KW-0560">Oxidoreductase</keyword>
<keyword id="KW-1185">Reference proteome</keyword>
<accession>Q742Z0</accession>
<feature type="chain" id="PRO_0000337654" description="2,3-dihydroxyphenylpropionate/2,3-dihydroxicinnamic acid 1,2-dioxygenase">
    <location>
        <begin position="1"/>
        <end position="312"/>
    </location>
</feature>
<feature type="active site" description="Proton donor" evidence="1">
    <location>
        <position position="115"/>
    </location>
</feature>
<feature type="active site" description="Proton acceptor" evidence="1">
    <location>
        <position position="179"/>
    </location>
</feature>
<proteinExistence type="inferred from homology"/>
<organism>
    <name type="scientific">Mycolicibacterium paratuberculosis (strain ATCC BAA-968 / K-10)</name>
    <name type="common">Mycobacterium paratuberculosis</name>
    <dbReference type="NCBI Taxonomy" id="262316"/>
    <lineage>
        <taxon>Bacteria</taxon>
        <taxon>Bacillati</taxon>
        <taxon>Actinomycetota</taxon>
        <taxon>Actinomycetes</taxon>
        <taxon>Mycobacteriales</taxon>
        <taxon>Mycobacteriaceae</taxon>
        <taxon>Mycobacterium</taxon>
        <taxon>Mycobacterium avium complex (MAC)</taxon>
    </lineage>
</organism>
<sequence length="312" mass="33150">MALALCCMSHSPLLNLPGPSRDLLDDIDAAIARARGFVEDYDPQLVVIFSPDHYNGFFYKVMPPFCIGSSASGVGDYGTHAGPLDVPEKLAVDCAQAVLDAGVDIAVSASMDVDHGTVQPLEKLFGTAISRPVIPVFVNAIGVPLGPMHRCRALGAAVGTYLATLDKRVLVMGSGGLSHSPPVPTLATAPEPVLQRIVHGAPMTAEQRQARQAAVIDAARSFAAGDSALQPLNPTWDHRFLEIIDRGSLSELDRWSNSFVTHEGGGSAHEIRTWVAAFAALQAAGPYETTMRYYTPAPELIAGFAIRTARPK</sequence>
<comment type="function">
    <text evidence="1">Catalyzes the non-heme iron(II)-dependent oxidative cleavage of 2,3-dihydroxyphenylpropionic acid and 2,3-dihydroxicinnamic acid into 2-hydroxy-6-ketononadienedioate and 2-hydroxy-6-ketononatrienedioate, respectively.</text>
</comment>
<comment type="catalytic activity">
    <reaction evidence="1">
        <text>3-(2,3-dihydroxyphenyl)propanoate + O2 = (2Z,4E)-2-hydroxy-6-oxonona-2,4-dienedioate + H(+)</text>
        <dbReference type="Rhea" id="RHEA:23840"/>
        <dbReference type="ChEBI" id="CHEBI:15378"/>
        <dbReference type="ChEBI" id="CHEBI:15379"/>
        <dbReference type="ChEBI" id="CHEBI:46951"/>
        <dbReference type="ChEBI" id="CHEBI:66887"/>
        <dbReference type="EC" id="1.13.11.16"/>
    </reaction>
</comment>
<comment type="catalytic activity">
    <reaction evidence="1">
        <text>(2E)-3-(2,3-dihydroxyphenyl)prop-2-enoate + O2 = (2Z,4E,7E)-2-hydroxy-6-oxonona-2,4,7-trienedioate + H(+)</text>
        <dbReference type="Rhea" id="RHEA:25054"/>
        <dbReference type="ChEBI" id="CHEBI:15378"/>
        <dbReference type="ChEBI" id="CHEBI:15379"/>
        <dbReference type="ChEBI" id="CHEBI:58642"/>
        <dbReference type="ChEBI" id="CHEBI:66888"/>
        <dbReference type="EC" id="1.13.11.16"/>
    </reaction>
</comment>
<comment type="cofactor">
    <cofactor evidence="1">
        <name>Fe(2+)</name>
        <dbReference type="ChEBI" id="CHEBI:29033"/>
    </cofactor>
</comment>
<comment type="pathway">
    <text evidence="1">Aromatic compound metabolism; 3-phenylpropanoate degradation.</text>
</comment>
<comment type="subunit">
    <text evidence="1">Homotetramer.</text>
</comment>
<comment type="similarity">
    <text evidence="1">Belongs to the LigB/MhpB extradiol dioxygenase family.</text>
</comment>
<comment type="sequence caution" evidence="2">
    <conflict type="erroneous initiation">
        <sequence resource="EMBL-CDS" id="AAS03012"/>
    </conflict>
</comment>
<dbReference type="EC" id="1.13.11.16" evidence="1"/>
<dbReference type="EMBL" id="AE016958">
    <property type="protein sequence ID" value="AAS03012.1"/>
    <property type="status" value="ALT_INIT"/>
    <property type="molecule type" value="Genomic_DNA"/>
</dbReference>
<dbReference type="SMR" id="Q742Z0"/>
<dbReference type="STRING" id="262316.MAP_0695"/>
<dbReference type="KEGG" id="mpa:MAP_0695"/>
<dbReference type="eggNOG" id="COG3384">
    <property type="taxonomic scope" value="Bacteria"/>
</dbReference>
<dbReference type="HOGENOM" id="CLU_078149_0_0_11"/>
<dbReference type="UniPathway" id="UPA00714"/>
<dbReference type="Proteomes" id="UP000000580">
    <property type="component" value="Chromosome"/>
</dbReference>
<dbReference type="GO" id="GO:0047070">
    <property type="term" value="F:3-carboxyethylcatechol 2,3-dioxygenase activity"/>
    <property type="evidence" value="ECO:0007669"/>
    <property type="project" value="UniProtKB-UniRule"/>
</dbReference>
<dbReference type="GO" id="GO:0008198">
    <property type="term" value="F:ferrous iron binding"/>
    <property type="evidence" value="ECO:0007669"/>
    <property type="project" value="InterPro"/>
</dbReference>
<dbReference type="GO" id="GO:0019380">
    <property type="term" value="P:3-phenylpropionate catabolic process"/>
    <property type="evidence" value="ECO:0007669"/>
    <property type="project" value="UniProtKB-UniRule"/>
</dbReference>
<dbReference type="Gene3D" id="3.40.830.10">
    <property type="entry name" value="LigB-like"/>
    <property type="match status" value="1"/>
</dbReference>
<dbReference type="HAMAP" id="MF_01653">
    <property type="entry name" value="MhpB"/>
    <property type="match status" value="1"/>
</dbReference>
<dbReference type="InterPro" id="IPR023789">
    <property type="entry name" value="DHPP/DHXA_dioxygenase"/>
</dbReference>
<dbReference type="InterPro" id="IPR004183">
    <property type="entry name" value="Xdiol_dOase_suB"/>
</dbReference>
<dbReference type="NCBIfam" id="NF009910">
    <property type="entry name" value="PRK13370.1-4"/>
    <property type="match status" value="1"/>
</dbReference>
<dbReference type="Pfam" id="PF02900">
    <property type="entry name" value="LigB"/>
    <property type="match status" value="1"/>
</dbReference>
<dbReference type="SUPFAM" id="SSF53213">
    <property type="entry name" value="LigB-like"/>
    <property type="match status" value="1"/>
</dbReference>
<protein>
    <recommendedName>
        <fullName evidence="1">2,3-dihydroxyphenylpropionate/2,3-dihydroxicinnamic acid 1,2-dioxygenase</fullName>
        <ecNumber evidence="1">1.13.11.16</ecNumber>
    </recommendedName>
    <alternativeName>
        <fullName evidence="1">3-carboxyethylcatechol 2,3-dioxygenase</fullName>
    </alternativeName>
</protein>
<gene>
    <name evidence="1" type="primary">mhpB</name>
    <name type="ordered locus">MAP_0695</name>
</gene>
<name>MHPB_MYCPA</name>